<proteinExistence type="inferred from homology"/>
<comment type="subcellular location">
    <subcellularLocation>
        <location evidence="1">Cell inner membrane</location>
        <topology evidence="1">Multi-pass membrane protein</topology>
    </subcellularLocation>
</comment>
<comment type="similarity">
    <text evidence="3">Belongs to the major facilitator superfamily.</text>
</comment>
<comment type="sequence caution" evidence="3">
    <conflict type="erroneous initiation">
        <sequence resource="EMBL-CDS" id="CAA14930"/>
    </conflict>
</comment>
<name>AMPG1_RICPR</name>
<sequence length="443" mass="50245">MLKNSHIYIIWLFGFISGFNVMITGNTLNYWFAKKDIALQTIGMLSFITLPYSINFLLAPVFDTVQIKYLNKILGHRLSWICLTSTTLISLIFILSFLDPSTDLVLLSFIAFIISFFSAAQDTILSALRTKIVPKESLGFTSGIYILGYRVGMLLASSGAIYLSIYLTFNAIYKIFAGVIFVYLILLILVARYTNSFDVMEENTSYSYVARCYAIADMNLKNKFFIKNYFNYFKNFISAYLLKIFSGFYFHRNDINLAYYIILILIFLVLYRLPDNLINVMINPFLLHLGYNAFEIASVCKFCGVMGAIIGGLIGGIIMKYKNILYSILLFGIIHALSHIFFILLEINGKNSLILFITIGVESITGGMTMTAYIAFISSLCQGKFRATQYSLLSSMMGISRSIFPIISGYMVVNFGWQNFFLFTTIITIPSLLILLKIKTKIN</sequence>
<keyword id="KW-0997">Cell inner membrane</keyword>
<keyword id="KW-1003">Cell membrane</keyword>
<keyword id="KW-0472">Membrane</keyword>
<keyword id="KW-1185">Reference proteome</keyword>
<keyword id="KW-0812">Transmembrane</keyword>
<keyword id="KW-1133">Transmembrane helix</keyword>
<keyword id="KW-0813">Transport</keyword>
<reference key="1">
    <citation type="journal article" date="1998" name="Nature">
        <title>The genome sequence of Rickettsia prowazekii and the origin of mitochondria.</title>
        <authorList>
            <person name="Andersson S.G.E."/>
            <person name="Zomorodipour A."/>
            <person name="Andersson J.O."/>
            <person name="Sicheritz-Ponten T."/>
            <person name="Alsmark U.C.M."/>
            <person name="Podowski R.M."/>
            <person name="Naeslund A.K."/>
            <person name="Eriksson A.-S."/>
            <person name="Winkler H.H."/>
            <person name="Kurland C.G."/>
        </authorList>
    </citation>
    <scope>NUCLEOTIDE SEQUENCE [LARGE SCALE GENOMIC DNA]</scope>
    <source>
        <strain>Madrid E</strain>
    </source>
</reference>
<gene>
    <name type="primary">ampG1</name>
    <name type="ordered locus">RP475</name>
</gene>
<evidence type="ECO:0000250" key="1"/>
<evidence type="ECO:0000255" key="2"/>
<evidence type="ECO:0000305" key="3"/>
<protein>
    <recommendedName>
        <fullName>Putative transporter AmpG 1</fullName>
    </recommendedName>
</protein>
<feature type="chain" id="PRO_0000281099" description="Putative transporter AmpG 1">
    <location>
        <begin position="1"/>
        <end position="443"/>
    </location>
</feature>
<feature type="transmembrane region" description="Helical" evidence="2">
    <location>
        <begin position="5"/>
        <end position="25"/>
    </location>
</feature>
<feature type="transmembrane region" description="Helical" evidence="2">
    <location>
        <begin position="42"/>
        <end position="62"/>
    </location>
</feature>
<feature type="transmembrane region" description="Helical" evidence="2">
    <location>
        <begin position="78"/>
        <end position="98"/>
    </location>
</feature>
<feature type="transmembrane region" description="Helical" evidence="2">
    <location>
        <begin position="104"/>
        <end position="124"/>
    </location>
</feature>
<feature type="transmembrane region" description="Helical" evidence="2">
    <location>
        <begin position="143"/>
        <end position="163"/>
    </location>
</feature>
<feature type="transmembrane region" description="Helical" evidence="2">
    <location>
        <begin position="171"/>
        <end position="191"/>
    </location>
</feature>
<feature type="transmembrane region" description="Helical" evidence="2">
    <location>
        <begin position="230"/>
        <end position="250"/>
    </location>
</feature>
<feature type="transmembrane region" description="Helical" evidence="2">
    <location>
        <begin position="254"/>
        <end position="274"/>
    </location>
</feature>
<feature type="transmembrane region" description="Helical" evidence="2">
    <location>
        <begin position="299"/>
        <end position="319"/>
    </location>
</feature>
<feature type="transmembrane region" description="Helical" evidence="2">
    <location>
        <begin position="324"/>
        <end position="344"/>
    </location>
</feature>
<feature type="transmembrane region" description="Helical" evidence="2">
    <location>
        <begin position="354"/>
        <end position="374"/>
    </location>
</feature>
<feature type="transmembrane region" description="Helical" evidence="2">
    <location>
        <begin position="393"/>
        <end position="413"/>
    </location>
</feature>
<feature type="transmembrane region" description="Helical" evidence="2">
    <location>
        <begin position="415"/>
        <end position="435"/>
    </location>
</feature>
<accession>Q9ZD69</accession>
<organism>
    <name type="scientific">Rickettsia prowazekii (strain Madrid E)</name>
    <dbReference type="NCBI Taxonomy" id="272947"/>
    <lineage>
        <taxon>Bacteria</taxon>
        <taxon>Pseudomonadati</taxon>
        <taxon>Pseudomonadota</taxon>
        <taxon>Alphaproteobacteria</taxon>
        <taxon>Rickettsiales</taxon>
        <taxon>Rickettsiaceae</taxon>
        <taxon>Rickettsieae</taxon>
        <taxon>Rickettsia</taxon>
        <taxon>typhus group</taxon>
    </lineage>
</organism>
<dbReference type="EMBL" id="AJ235271">
    <property type="protein sequence ID" value="CAA14930.1"/>
    <property type="status" value="ALT_INIT"/>
    <property type="molecule type" value="Genomic_DNA"/>
</dbReference>
<dbReference type="PIR" id="H71706">
    <property type="entry name" value="H71706"/>
</dbReference>
<dbReference type="RefSeq" id="NP_220854.1">
    <property type="nucleotide sequence ID" value="NC_000963.1"/>
</dbReference>
<dbReference type="RefSeq" id="WP_004599497.1">
    <property type="nucleotide sequence ID" value="NC_000963.1"/>
</dbReference>
<dbReference type="SMR" id="Q9ZD69"/>
<dbReference type="STRING" id="272947.gene:17555555"/>
<dbReference type="EnsemblBacteria" id="CAA14930">
    <property type="protein sequence ID" value="CAA14930"/>
    <property type="gene ID" value="CAA14930"/>
</dbReference>
<dbReference type="KEGG" id="rpr:RP475"/>
<dbReference type="PATRIC" id="fig|272947.5.peg.486"/>
<dbReference type="eggNOG" id="COG2807">
    <property type="taxonomic scope" value="Bacteria"/>
</dbReference>
<dbReference type="HOGENOM" id="CLU_029352_1_2_5"/>
<dbReference type="OrthoDB" id="9787815at2"/>
<dbReference type="Proteomes" id="UP000002480">
    <property type="component" value="Chromosome"/>
</dbReference>
<dbReference type="GO" id="GO:0005886">
    <property type="term" value="C:plasma membrane"/>
    <property type="evidence" value="ECO:0007669"/>
    <property type="project" value="UniProtKB-SubCell"/>
</dbReference>
<dbReference type="GO" id="GO:0022857">
    <property type="term" value="F:transmembrane transporter activity"/>
    <property type="evidence" value="ECO:0007669"/>
    <property type="project" value="InterPro"/>
</dbReference>
<dbReference type="Gene3D" id="1.20.1250.20">
    <property type="entry name" value="MFS general substrate transporter like domains"/>
    <property type="match status" value="2"/>
</dbReference>
<dbReference type="InterPro" id="IPR004752">
    <property type="entry name" value="AmpG_permease/AT-1"/>
</dbReference>
<dbReference type="InterPro" id="IPR011701">
    <property type="entry name" value="MFS"/>
</dbReference>
<dbReference type="InterPro" id="IPR020846">
    <property type="entry name" value="MFS_dom"/>
</dbReference>
<dbReference type="InterPro" id="IPR036259">
    <property type="entry name" value="MFS_trans_sf"/>
</dbReference>
<dbReference type="NCBIfam" id="TIGR00901">
    <property type="entry name" value="2A0125"/>
    <property type="match status" value="1"/>
</dbReference>
<dbReference type="PANTHER" id="PTHR12778:SF10">
    <property type="entry name" value="MAJOR FACILITATOR SUPERFAMILY DOMAIN-CONTAINING PROTEIN 3"/>
    <property type="match status" value="1"/>
</dbReference>
<dbReference type="PANTHER" id="PTHR12778">
    <property type="entry name" value="SOLUTE CARRIER FAMILY 33 ACETYL-COA TRANSPORTER -RELATED"/>
    <property type="match status" value="1"/>
</dbReference>
<dbReference type="Pfam" id="PF07690">
    <property type="entry name" value="MFS_1"/>
    <property type="match status" value="1"/>
</dbReference>
<dbReference type="SUPFAM" id="SSF103473">
    <property type="entry name" value="MFS general substrate transporter"/>
    <property type="match status" value="1"/>
</dbReference>
<dbReference type="PROSITE" id="PS50850">
    <property type="entry name" value="MFS"/>
    <property type="match status" value="1"/>
</dbReference>